<dbReference type="EMBL" id="AB189464">
    <property type="protein sequence ID" value="BAD42412.1"/>
    <property type="molecule type" value="mRNA"/>
</dbReference>
<dbReference type="EMBL" id="AL035678">
    <property type="status" value="NOT_ANNOTATED_CDS"/>
    <property type="molecule type" value="Genomic_DNA"/>
</dbReference>
<dbReference type="EMBL" id="CP002687">
    <property type="protein sequence ID" value="AEE86235.1"/>
    <property type="molecule type" value="Genomic_DNA"/>
</dbReference>
<dbReference type="EMBL" id="AK118818">
    <property type="protein sequence ID" value="BAC43408.1"/>
    <property type="status" value="ALT_INIT"/>
    <property type="molecule type" value="mRNA"/>
</dbReference>
<dbReference type="RefSeq" id="NP_680759.1">
    <property type="nucleotide sequence ID" value="NM_148393.3"/>
</dbReference>
<dbReference type="SMR" id="Q689D6"/>
<dbReference type="FunCoup" id="Q689D6">
    <property type="interactions" value="1575"/>
</dbReference>
<dbReference type="PaxDb" id="3702-AT4G33495.1"/>
<dbReference type="ProteomicsDB" id="227956"/>
<dbReference type="EnsemblPlants" id="AT4G33495.1">
    <property type="protein sequence ID" value="AT4G33495.1"/>
    <property type="gene ID" value="AT4G33495"/>
</dbReference>
<dbReference type="GeneID" id="829487"/>
<dbReference type="Gramene" id="AT4G33495.1">
    <property type="protein sequence ID" value="AT4G33495.1"/>
    <property type="gene ID" value="AT4G33495"/>
</dbReference>
<dbReference type="KEGG" id="ath:AT4G33495"/>
<dbReference type="Araport" id="AT4G33495"/>
<dbReference type="TAIR" id="AT4G33495">
    <property type="gene designation" value="RPD1"/>
</dbReference>
<dbReference type="eggNOG" id="ENOG502QVHJ">
    <property type="taxonomic scope" value="Eukaryota"/>
</dbReference>
<dbReference type="HOGENOM" id="CLU_024287_0_1_1"/>
<dbReference type="InParanoid" id="Q689D6"/>
<dbReference type="OMA" id="PPGFKIS"/>
<dbReference type="PhylomeDB" id="Q689D6"/>
<dbReference type="PRO" id="PR:Q689D6"/>
<dbReference type="Proteomes" id="UP000006548">
    <property type="component" value="Chromosome 4"/>
</dbReference>
<dbReference type="ExpressionAtlas" id="Q689D6">
    <property type="expression patterns" value="baseline and differential"/>
</dbReference>
<dbReference type="GO" id="GO:0003723">
    <property type="term" value="F:RNA binding"/>
    <property type="evidence" value="ECO:0007669"/>
    <property type="project" value="InterPro"/>
</dbReference>
<dbReference type="GO" id="GO:0010102">
    <property type="term" value="P:lateral root morphogenesis"/>
    <property type="evidence" value="ECO:0000315"/>
    <property type="project" value="TAIR"/>
</dbReference>
<dbReference type="GO" id="GO:0008285">
    <property type="term" value="P:negative regulation of cell population proliferation"/>
    <property type="evidence" value="ECO:0000315"/>
    <property type="project" value="TAIR"/>
</dbReference>
<dbReference type="InterPro" id="IPR021099">
    <property type="entry name" value="PORR_domain"/>
</dbReference>
<dbReference type="InterPro" id="IPR045040">
    <property type="entry name" value="PORR_fam"/>
</dbReference>
<dbReference type="PANTHER" id="PTHR31476:SF9">
    <property type="entry name" value="PROTEIN ROOT PRIMORDIUM DEFECTIVE 1"/>
    <property type="match status" value="1"/>
</dbReference>
<dbReference type="PANTHER" id="PTHR31476">
    <property type="entry name" value="PROTEIN WHAT'S THIS FACTOR 1 HOMOLOG, CHLOROPLASTIC"/>
    <property type="match status" value="1"/>
</dbReference>
<dbReference type="Pfam" id="PF11955">
    <property type="entry name" value="PORR"/>
    <property type="match status" value="1"/>
</dbReference>
<accession>Q689D6</accession>
<accession>Q8GWI6</accession>
<keyword id="KW-1185">Reference proteome</keyword>
<proteinExistence type="evidence at protein level"/>
<feature type="chain" id="PRO_0000423019" description="Protein ROOT PRIMORDIUM DEFECTIVE 1">
    <location>
        <begin position="1"/>
        <end position="409"/>
    </location>
</feature>
<feature type="domain" description="PORR" evidence="1">
    <location>
        <begin position="47"/>
        <end position="386"/>
    </location>
</feature>
<feature type="mutagenesis site" description="In rpd1-2; impaired in adventitious root formation at the restrictive temperature of 28 degrees Celsius." evidence="2">
    <original>R</original>
    <variation>W</variation>
    <location>
        <position position="152"/>
    </location>
</feature>
<feature type="mutagenesis site" description="In rpd1-1; impaired in adventitious root formation and maintenance of callus cell proliferation at the restrictive temperature of 28 degrees Celsius." evidence="2">
    <original>E</original>
    <variation>K</variation>
    <location>
        <position position="308"/>
    </location>
</feature>
<feature type="sequence conflict" description="In Ref. 4; BAC43408." evidence="3" ref="4">
    <original>D</original>
    <variation>G</variation>
    <location>
        <position position="236"/>
    </location>
</feature>
<protein>
    <recommendedName>
        <fullName>Protein ROOT PRIMORDIUM DEFECTIVE 1</fullName>
    </recommendedName>
</protein>
<reference key="1">
    <citation type="journal article" date="2006" name="Plant Physiol.">
        <title>A novel plant-specific family gene, ROOT PRIMORDIUM DEFECTIVE 1, is required for the maintenance of active cell proliferation.</title>
        <authorList>
            <person name="Konishi M."/>
            <person name="Sugiyama M."/>
        </authorList>
    </citation>
    <scope>NUCLEOTIDE SEQUENCE [MRNA]</scope>
    <scope>FUNCTION</scope>
    <scope>TISSUE SPECIFICITY</scope>
    <scope>DISRUPTION PHENOTYPE</scope>
    <scope>MUTAGENESIS OF ARG-152 AND GLU-308</scope>
    <source>
        <strain>cv. Landsberg erecta</strain>
    </source>
</reference>
<reference key="2">
    <citation type="journal article" date="1999" name="Nature">
        <title>Sequence and analysis of chromosome 4 of the plant Arabidopsis thaliana.</title>
        <authorList>
            <person name="Mayer K.F.X."/>
            <person name="Schueller C."/>
            <person name="Wambutt R."/>
            <person name="Murphy G."/>
            <person name="Volckaert G."/>
            <person name="Pohl T."/>
            <person name="Duesterhoeft A."/>
            <person name="Stiekema W."/>
            <person name="Entian K.-D."/>
            <person name="Terryn N."/>
            <person name="Harris B."/>
            <person name="Ansorge W."/>
            <person name="Brandt P."/>
            <person name="Grivell L.A."/>
            <person name="Rieger M."/>
            <person name="Weichselgartner M."/>
            <person name="de Simone V."/>
            <person name="Obermaier B."/>
            <person name="Mache R."/>
            <person name="Mueller M."/>
            <person name="Kreis M."/>
            <person name="Delseny M."/>
            <person name="Puigdomenech P."/>
            <person name="Watson M."/>
            <person name="Schmidtheini T."/>
            <person name="Reichert B."/>
            <person name="Portetelle D."/>
            <person name="Perez-Alonso M."/>
            <person name="Boutry M."/>
            <person name="Bancroft I."/>
            <person name="Vos P."/>
            <person name="Hoheisel J."/>
            <person name="Zimmermann W."/>
            <person name="Wedler H."/>
            <person name="Ridley P."/>
            <person name="Langham S.-A."/>
            <person name="McCullagh B."/>
            <person name="Bilham L."/>
            <person name="Robben J."/>
            <person name="van der Schueren J."/>
            <person name="Grymonprez B."/>
            <person name="Chuang Y.-J."/>
            <person name="Vandenbussche F."/>
            <person name="Braeken M."/>
            <person name="Weltjens I."/>
            <person name="Voet M."/>
            <person name="Bastiaens I."/>
            <person name="Aert R."/>
            <person name="Defoor E."/>
            <person name="Weitzenegger T."/>
            <person name="Bothe G."/>
            <person name="Ramsperger U."/>
            <person name="Hilbert H."/>
            <person name="Braun M."/>
            <person name="Holzer E."/>
            <person name="Brandt A."/>
            <person name="Peters S."/>
            <person name="van Staveren M."/>
            <person name="Dirkse W."/>
            <person name="Mooijman P."/>
            <person name="Klein Lankhorst R."/>
            <person name="Rose M."/>
            <person name="Hauf J."/>
            <person name="Koetter P."/>
            <person name="Berneiser S."/>
            <person name="Hempel S."/>
            <person name="Feldpausch M."/>
            <person name="Lamberth S."/>
            <person name="Van den Daele H."/>
            <person name="De Keyser A."/>
            <person name="Buysshaert C."/>
            <person name="Gielen J."/>
            <person name="Villarroel R."/>
            <person name="De Clercq R."/>
            <person name="van Montagu M."/>
            <person name="Rogers J."/>
            <person name="Cronin A."/>
            <person name="Quail M.A."/>
            <person name="Bray-Allen S."/>
            <person name="Clark L."/>
            <person name="Doggett J."/>
            <person name="Hall S."/>
            <person name="Kay M."/>
            <person name="Lennard N."/>
            <person name="McLay K."/>
            <person name="Mayes R."/>
            <person name="Pettett A."/>
            <person name="Rajandream M.A."/>
            <person name="Lyne M."/>
            <person name="Benes V."/>
            <person name="Rechmann S."/>
            <person name="Borkova D."/>
            <person name="Bloecker H."/>
            <person name="Scharfe M."/>
            <person name="Grimm M."/>
            <person name="Loehnert T.-H."/>
            <person name="Dose S."/>
            <person name="de Haan M."/>
            <person name="Maarse A.C."/>
            <person name="Schaefer M."/>
            <person name="Mueller-Auer S."/>
            <person name="Gabel C."/>
            <person name="Fuchs M."/>
            <person name="Fartmann B."/>
            <person name="Granderath K."/>
            <person name="Dauner D."/>
            <person name="Herzl A."/>
            <person name="Neumann S."/>
            <person name="Argiriou A."/>
            <person name="Vitale D."/>
            <person name="Liguori R."/>
            <person name="Piravandi E."/>
            <person name="Massenet O."/>
            <person name="Quigley F."/>
            <person name="Clabauld G."/>
            <person name="Muendlein A."/>
            <person name="Felber R."/>
            <person name="Schnabl S."/>
            <person name="Hiller R."/>
            <person name="Schmidt W."/>
            <person name="Lecharny A."/>
            <person name="Aubourg S."/>
            <person name="Chefdor F."/>
            <person name="Cooke R."/>
            <person name="Berger C."/>
            <person name="Monfort A."/>
            <person name="Casacuberta E."/>
            <person name="Gibbons T."/>
            <person name="Weber N."/>
            <person name="Vandenbol M."/>
            <person name="Bargues M."/>
            <person name="Terol J."/>
            <person name="Torres A."/>
            <person name="Perez-Perez A."/>
            <person name="Purnelle B."/>
            <person name="Bent E."/>
            <person name="Johnson S."/>
            <person name="Tacon D."/>
            <person name="Jesse T."/>
            <person name="Heijnen L."/>
            <person name="Schwarz S."/>
            <person name="Scholler P."/>
            <person name="Heber S."/>
            <person name="Francs P."/>
            <person name="Bielke C."/>
            <person name="Frishman D."/>
            <person name="Haase D."/>
            <person name="Lemcke K."/>
            <person name="Mewes H.-W."/>
            <person name="Stocker S."/>
            <person name="Zaccaria P."/>
            <person name="Bevan M."/>
            <person name="Wilson R.K."/>
            <person name="de la Bastide M."/>
            <person name="Habermann K."/>
            <person name="Parnell L."/>
            <person name="Dedhia N."/>
            <person name="Gnoj L."/>
            <person name="Schutz K."/>
            <person name="Huang E."/>
            <person name="Spiegel L."/>
            <person name="Sekhon M."/>
            <person name="Murray J."/>
            <person name="Sheet P."/>
            <person name="Cordes M."/>
            <person name="Abu-Threideh J."/>
            <person name="Stoneking T."/>
            <person name="Kalicki J."/>
            <person name="Graves T."/>
            <person name="Harmon G."/>
            <person name="Edwards J."/>
            <person name="Latreille P."/>
            <person name="Courtney L."/>
            <person name="Cloud J."/>
            <person name="Abbott A."/>
            <person name="Scott K."/>
            <person name="Johnson D."/>
            <person name="Minx P."/>
            <person name="Bentley D."/>
            <person name="Fulton B."/>
            <person name="Miller N."/>
            <person name="Greco T."/>
            <person name="Kemp K."/>
            <person name="Kramer J."/>
            <person name="Fulton L."/>
            <person name="Mardis E."/>
            <person name="Dante M."/>
            <person name="Pepin K."/>
            <person name="Hillier L.W."/>
            <person name="Nelson J."/>
            <person name="Spieth J."/>
            <person name="Ryan E."/>
            <person name="Andrews S."/>
            <person name="Geisel C."/>
            <person name="Layman D."/>
            <person name="Du H."/>
            <person name="Ali J."/>
            <person name="Berghoff A."/>
            <person name="Jones K."/>
            <person name="Drone K."/>
            <person name="Cotton M."/>
            <person name="Joshu C."/>
            <person name="Antonoiu B."/>
            <person name="Zidanic M."/>
            <person name="Strong C."/>
            <person name="Sun H."/>
            <person name="Lamar B."/>
            <person name="Yordan C."/>
            <person name="Ma P."/>
            <person name="Zhong J."/>
            <person name="Preston R."/>
            <person name="Vil D."/>
            <person name="Shekher M."/>
            <person name="Matero A."/>
            <person name="Shah R."/>
            <person name="Swaby I.K."/>
            <person name="O'Shaughnessy A."/>
            <person name="Rodriguez M."/>
            <person name="Hoffman J."/>
            <person name="Till S."/>
            <person name="Granat S."/>
            <person name="Shohdy N."/>
            <person name="Hasegawa A."/>
            <person name="Hameed A."/>
            <person name="Lodhi M."/>
            <person name="Johnson A."/>
            <person name="Chen E."/>
            <person name="Marra M.A."/>
            <person name="Martienssen R."/>
            <person name="McCombie W.R."/>
        </authorList>
    </citation>
    <scope>NUCLEOTIDE SEQUENCE [LARGE SCALE GENOMIC DNA]</scope>
    <source>
        <strain>cv. Columbia</strain>
    </source>
</reference>
<reference key="3">
    <citation type="journal article" date="2017" name="Plant J.">
        <title>Araport11: a complete reannotation of the Arabidopsis thaliana reference genome.</title>
        <authorList>
            <person name="Cheng C.Y."/>
            <person name="Krishnakumar V."/>
            <person name="Chan A.P."/>
            <person name="Thibaud-Nissen F."/>
            <person name="Schobel S."/>
            <person name="Town C.D."/>
        </authorList>
    </citation>
    <scope>GENOME REANNOTATION</scope>
    <source>
        <strain>cv. Columbia</strain>
    </source>
</reference>
<reference key="4">
    <citation type="journal article" date="2002" name="Science">
        <title>Functional annotation of a full-length Arabidopsis cDNA collection.</title>
        <authorList>
            <person name="Seki M."/>
            <person name="Narusaka M."/>
            <person name="Kamiya A."/>
            <person name="Ishida J."/>
            <person name="Satou M."/>
            <person name="Sakurai T."/>
            <person name="Nakajima M."/>
            <person name="Enju A."/>
            <person name="Akiyama K."/>
            <person name="Oono Y."/>
            <person name="Muramatsu M."/>
            <person name="Hayashizaki Y."/>
            <person name="Kawai J."/>
            <person name="Carninci P."/>
            <person name="Itoh M."/>
            <person name="Ishii Y."/>
            <person name="Arakawa T."/>
            <person name="Shibata K."/>
            <person name="Shinagawa A."/>
            <person name="Shinozaki K."/>
        </authorList>
    </citation>
    <scope>NUCLEOTIDE SEQUENCE [LARGE SCALE MRNA] OF 20-409</scope>
    <source>
        <strain>cv. Columbia</strain>
    </source>
</reference>
<reference key="5">
    <citation type="journal article" date="2003" name="Development">
        <title>Genetic analysis of adventitious root formation with a novel series of temperature-sensitive mutants of Arabidopsis thaliana.</title>
        <authorList>
            <person name="Konishi M."/>
            <person name="Sugiyama M."/>
        </authorList>
    </citation>
    <scope>MUTANT RPD1</scope>
</reference>
<organism>
    <name type="scientific">Arabidopsis thaliana</name>
    <name type="common">Mouse-ear cress</name>
    <dbReference type="NCBI Taxonomy" id="3702"/>
    <lineage>
        <taxon>Eukaryota</taxon>
        <taxon>Viridiplantae</taxon>
        <taxon>Streptophyta</taxon>
        <taxon>Embryophyta</taxon>
        <taxon>Tracheophyta</taxon>
        <taxon>Spermatophyta</taxon>
        <taxon>Magnoliopsida</taxon>
        <taxon>eudicotyledons</taxon>
        <taxon>Gunneridae</taxon>
        <taxon>Pentapetalae</taxon>
        <taxon>rosids</taxon>
        <taxon>malvids</taxon>
        <taxon>Brassicales</taxon>
        <taxon>Brassicaceae</taxon>
        <taxon>Camelineae</taxon>
        <taxon>Arabidopsis</taxon>
    </lineage>
</organism>
<sequence>MKLFLRNAFKTLNPKRKLATTILPSINLILVKPFSQSTTIPKKQDRVRDHGYDNYMEVEKKIRKVVKFHSLILSQPNHTIAISLLDTLARRLGLGFKQHEPGAFLLKFPHVFEIYEHPVQRILYCRLTRKALDQIRHEHEAVLDQIPDAVTRLRKLVMMSNTGRIRLEHVRIARTEFGLPEDFEYSVILKHPQFFRLIDGEETRDKYIEIVEKDPNLSICAIERVREIEYRTKGIDAEDVRFSFVVNFPPGFKIGKYFRIAVWKWQRLPYWSPYEDISGYDLRSMEAQNRLEKRSVACIHELLSLTVEKKITLERIAHFRNVMNLPKKLKEFLLQHQGIFYISTRGNYGKLHTVFLREGYKRGELVEPNDVYLARRRLAELVLMSPRKAKVDAELVRYRDGLDDEDDVE</sequence>
<comment type="function">
    <text evidence="2">Involved in pre-arranging the maintenance of the active cell proliferation during root primordium development. Does not seem to be involved in cell cycle progression.</text>
</comment>
<comment type="tissue specificity">
    <text evidence="2">Expressed in roots, hypocotyls, cotyledons and shoot apex.</text>
</comment>
<comment type="disruption phenotype">
    <text evidence="2">Embryo lethal when homozygous.</text>
</comment>
<comment type="sequence caution" evidence="3">
    <conflict type="erroneous initiation">
        <sequence resource="EMBL-CDS" id="BAC43408"/>
    </conflict>
    <text>Truncated N-terminus.</text>
</comment>
<evidence type="ECO:0000255" key="1"/>
<evidence type="ECO:0000269" key="2">
    <source>
    </source>
</evidence>
<evidence type="ECO:0000305" key="3"/>
<gene>
    <name type="primary">RPD1</name>
    <name type="ordered locus">At4g33495</name>
    <name type="ORF">F17M5</name>
</gene>
<name>RPD1_ARATH</name>